<organism>
    <name type="scientific">Staphylococcus aureus (strain MRSA252)</name>
    <dbReference type="NCBI Taxonomy" id="282458"/>
    <lineage>
        <taxon>Bacteria</taxon>
        <taxon>Bacillati</taxon>
        <taxon>Bacillota</taxon>
        <taxon>Bacilli</taxon>
        <taxon>Bacillales</taxon>
        <taxon>Staphylococcaceae</taxon>
        <taxon>Staphylococcus</taxon>
    </lineage>
</organism>
<proteinExistence type="inferred from homology"/>
<sequence>MIYQKQRNTAETQLNISISDDQSPSHINTGVGFLNHMLTLFTFHSGLSLNIEAQGDIDVDDHHVTEDIGIVIGQLLLEMIKDKKHFVRYGTMYISMDETLARVVVDISGRPYLSFNATLSKEKVGTFDTELVEEFFRAVVINARLTTHIDLIRGGNTHHEIEAIFKAFSRALGIALTATDDQRVPSSKGVIE</sequence>
<protein>
    <recommendedName>
        <fullName evidence="1">Imidazoleglycerol-phosphate dehydratase</fullName>
        <shortName evidence="1">IGPD</shortName>
        <ecNumber evidence="1">4.2.1.19</ecNumber>
    </recommendedName>
</protein>
<name>HIS7_STAAR</name>
<reference key="1">
    <citation type="journal article" date="2004" name="Proc. Natl. Acad. Sci. U.S.A.">
        <title>Complete genomes of two clinical Staphylococcus aureus strains: evidence for the rapid evolution of virulence and drug resistance.</title>
        <authorList>
            <person name="Holden M.T.G."/>
            <person name="Feil E.J."/>
            <person name="Lindsay J.A."/>
            <person name="Peacock S.J."/>
            <person name="Day N.P.J."/>
            <person name="Enright M.C."/>
            <person name="Foster T.J."/>
            <person name="Moore C.E."/>
            <person name="Hurst L."/>
            <person name="Atkin R."/>
            <person name="Barron A."/>
            <person name="Bason N."/>
            <person name="Bentley S.D."/>
            <person name="Chillingworth C."/>
            <person name="Chillingworth T."/>
            <person name="Churcher C."/>
            <person name="Clark L."/>
            <person name="Corton C."/>
            <person name="Cronin A."/>
            <person name="Doggett J."/>
            <person name="Dowd L."/>
            <person name="Feltwell T."/>
            <person name="Hance Z."/>
            <person name="Harris B."/>
            <person name="Hauser H."/>
            <person name="Holroyd S."/>
            <person name="Jagels K."/>
            <person name="James K.D."/>
            <person name="Lennard N."/>
            <person name="Line A."/>
            <person name="Mayes R."/>
            <person name="Moule S."/>
            <person name="Mungall K."/>
            <person name="Ormond D."/>
            <person name="Quail M.A."/>
            <person name="Rabbinowitsch E."/>
            <person name="Rutherford K.M."/>
            <person name="Sanders M."/>
            <person name="Sharp S."/>
            <person name="Simmonds M."/>
            <person name="Stevens K."/>
            <person name="Whitehead S."/>
            <person name="Barrell B.G."/>
            <person name="Spratt B.G."/>
            <person name="Parkhill J."/>
        </authorList>
    </citation>
    <scope>NUCLEOTIDE SEQUENCE [LARGE SCALE GENOMIC DNA]</scope>
    <source>
        <strain>MRSA252</strain>
    </source>
</reference>
<keyword id="KW-0028">Amino-acid biosynthesis</keyword>
<keyword id="KW-0963">Cytoplasm</keyword>
<keyword id="KW-0368">Histidine biosynthesis</keyword>
<keyword id="KW-0456">Lyase</keyword>
<feature type="chain" id="PRO_0000158168" description="Imidazoleglycerol-phosphate dehydratase">
    <location>
        <begin position="1"/>
        <end position="192"/>
    </location>
</feature>
<evidence type="ECO:0000255" key="1">
    <source>
        <dbReference type="HAMAP-Rule" id="MF_00076"/>
    </source>
</evidence>
<gene>
    <name evidence="1" type="primary">hisB</name>
    <name type="ordered locus">SAR2758</name>
</gene>
<dbReference type="EC" id="4.2.1.19" evidence="1"/>
<dbReference type="EMBL" id="BX571856">
    <property type="protein sequence ID" value="CAG41733.1"/>
    <property type="molecule type" value="Genomic_DNA"/>
</dbReference>
<dbReference type="RefSeq" id="WP_000640272.1">
    <property type="nucleotide sequence ID" value="NC_002952.2"/>
</dbReference>
<dbReference type="SMR" id="Q6GDC8"/>
<dbReference type="KEGG" id="sar:SAR2758"/>
<dbReference type="HOGENOM" id="CLU_044308_3_0_9"/>
<dbReference type="UniPathway" id="UPA00031">
    <property type="reaction ID" value="UER00011"/>
</dbReference>
<dbReference type="Proteomes" id="UP000000596">
    <property type="component" value="Chromosome"/>
</dbReference>
<dbReference type="GO" id="GO:0005737">
    <property type="term" value="C:cytoplasm"/>
    <property type="evidence" value="ECO:0007669"/>
    <property type="project" value="UniProtKB-SubCell"/>
</dbReference>
<dbReference type="GO" id="GO:0004424">
    <property type="term" value="F:imidazoleglycerol-phosphate dehydratase activity"/>
    <property type="evidence" value="ECO:0007669"/>
    <property type="project" value="UniProtKB-UniRule"/>
</dbReference>
<dbReference type="GO" id="GO:0000105">
    <property type="term" value="P:L-histidine biosynthetic process"/>
    <property type="evidence" value="ECO:0007669"/>
    <property type="project" value="UniProtKB-UniRule"/>
</dbReference>
<dbReference type="CDD" id="cd07914">
    <property type="entry name" value="IGPD"/>
    <property type="match status" value="1"/>
</dbReference>
<dbReference type="FunFam" id="3.30.230.40:FF:000001">
    <property type="entry name" value="Imidazoleglycerol-phosphate dehydratase HisB"/>
    <property type="match status" value="1"/>
</dbReference>
<dbReference type="FunFam" id="3.30.230.40:FF:000003">
    <property type="entry name" value="Imidazoleglycerol-phosphate dehydratase HisB"/>
    <property type="match status" value="1"/>
</dbReference>
<dbReference type="Gene3D" id="3.30.230.40">
    <property type="entry name" value="Imidazole glycerol phosphate dehydratase, domain 1"/>
    <property type="match status" value="2"/>
</dbReference>
<dbReference type="HAMAP" id="MF_00076">
    <property type="entry name" value="HisB"/>
    <property type="match status" value="1"/>
</dbReference>
<dbReference type="InterPro" id="IPR038494">
    <property type="entry name" value="IGPD_sf"/>
</dbReference>
<dbReference type="InterPro" id="IPR000807">
    <property type="entry name" value="ImidazoleglycerolP_deHydtase"/>
</dbReference>
<dbReference type="InterPro" id="IPR020565">
    <property type="entry name" value="ImidazoleglycerP_deHydtase_CS"/>
</dbReference>
<dbReference type="InterPro" id="IPR020568">
    <property type="entry name" value="Ribosomal_Su5_D2-typ_SF"/>
</dbReference>
<dbReference type="NCBIfam" id="NF002107">
    <property type="entry name" value="PRK00951.1-2"/>
    <property type="match status" value="1"/>
</dbReference>
<dbReference type="NCBIfam" id="NF002111">
    <property type="entry name" value="PRK00951.2-1"/>
    <property type="match status" value="1"/>
</dbReference>
<dbReference type="NCBIfam" id="NF002114">
    <property type="entry name" value="PRK00951.2-4"/>
    <property type="match status" value="1"/>
</dbReference>
<dbReference type="PANTHER" id="PTHR23133:SF2">
    <property type="entry name" value="IMIDAZOLEGLYCEROL-PHOSPHATE DEHYDRATASE"/>
    <property type="match status" value="1"/>
</dbReference>
<dbReference type="PANTHER" id="PTHR23133">
    <property type="entry name" value="IMIDAZOLEGLYCEROL-PHOSPHATE DEHYDRATASE HIS7"/>
    <property type="match status" value="1"/>
</dbReference>
<dbReference type="Pfam" id="PF00475">
    <property type="entry name" value="IGPD"/>
    <property type="match status" value="1"/>
</dbReference>
<dbReference type="SUPFAM" id="SSF54211">
    <property type="entry name" value="Ribosomal protein S5 domain 2-like"/>
    <property type="match status" value="2"/>
</dbReference>
<dbReference type="PROSITE" id="PS00954">
    <property type="entry name" value="IGP_DEHYDRATASE_1"/>
    <property type="match status" value="1"/>
</dbReference>
<dbReference type="PROSITE" id="PS00955">
    <property type="entry name" value="IGP_DEHYDRATASE_2"/>
    <property type="match status" value="1"/>
</dbReference>
<accession>Q6GDC8</accession>
<comment type="catalytic activity">
    <reaction evidence="1">
        <text>D-erythro-1-(imidazol-4-yl)glycerol 3-phosphate = 3-(imidazol-4-yl)-2-oxopropyl phosphate + H2O</text>
        <dbReference type="Rhea" id="RHEA:11040"/>
        <dbReference type="ChEBI" id="CHEBI:15377"/>
        <dbReference type="ChEBI" id="CHEBI:57766"/>
        <dbReference type="ChEBI" id="CHEBI:58278"/>
        <dbReference type="EC" id="4.2.1.19"/>
    </reaction>
</comment>
<comment type="pathway">
    <text evidence="1">Amino-acid biosynthesis; L-histidine biosynthesis; L-histidine from 5-phospho-alpha-D-ribose 1-diphosphate: step 6/9.</text>
</comment>
<comment type="subcellular location">
    <subcellularLocation>
        <location evidence="1">Cytoplasm</location>
    </subcellularLocation>
</comment>
<comment type="similarity">
    <text evidence="1">Belongs to the imidazoleglycerol-phosphate dehydratase family.</text>
</comment>